<feature type="signal peptide" evidence="1">
    <location>
        <begin position="1"/>
        <end position="21"/>
    </location>
</feature>
<feature type="chain" id="PRO_0000169753" description="Uncharacterized protein YjfN">
    <location>
        <begin position="22"/>
        <end position="91"/>
    </location>
</feature>
<protein>
    <recommendedName>
        <fullName>Uncharacterized protein YjfN</fullName>
    </recommendedName>
</protein>
<evidence type="ECO:0000255" key="1"/>
<evidence type="ECO:0000305" key="2"/>
<gene>
    <name type="primary">yjfN</name>
    <name type="ordered locus">b4188</name>
    <name type="ordered locus">JW5742</name>
</gene>
<name>YJFN_ECOLI</name>
<comment type="subcellular location">
    <subcellularLocation>
        <location evidence="2">Periplasm</location>
    </subcellularLocation>
</comment>
<comment type="similarity">
    <text evidence="2">Belongs to the BhsA/McbA family.</text>
</comment>
<comment type="sequence caution" evidence="2">
    <conflict type="erroneous initiation">
        <sequence resource="EMBL-CDS" id="AAA97084"/>
    </conflict>
    <text>Extended N-terminus.</text>
</comment>
<proteinExistence type="inferred from homology"/>
<reference key="1">
    <citation type="journal article" date="1995" name="Nucleic Acids Res.">
        <title>Analysis of the Escherichia coli genome VI: DNA sequence of the region from 92.8 through 100 minutes.</title>
        <authorList>
            <person name="Burland V.D."/>
            <person name="Plunkett G. III"/>
            <person name="Sofia H.J."/>
            <person name="Daniels D.L."/>
            <person name="Blattner F.R."/>
        </authorList>
    </citation>
    <scope>NUCLEOTIDE SEQUENCE [LARGE SCALE GENOMIC DNA]</scope>
    <source>
        <strain>K12 / MG1655 / ATCC 47076</strain>
    </source>
</reference>
<reference key="2">
    <citation type="journal article" date="1997" name="Science">
        <title>The complete genome sequence of Escherichia coli K-12.</title>
        <authorList>
            <person name="Blattner F.R."/>
            <person name="Plunkett G. III"/>
            <person name="Bloch C.A."/>
            <person name="Perna N.T."/>
            <person name="Burland V."/>
            <person name="Riley M."/>
            <person name="Collado-Vides J."/>
            <person name="Glasner J.D."/>
            <person name="Rode C.K."/>
            <person name="Mayhew G.F."/>
            <person name="Gregor J."/>
            <person name="Davis N.W."/>
            <person name="Kirkpatrick H.A."/>
            <person name="Goeden M.A."/>
            <person name="Rose D.J."/>
            <person name="Mau B."/>
            <person name="Shao Y."/>
        </authorList>
    </citation>
    <scope>NUCLEOTIDE SEQUENCE [LARGE SCALE GENOMIC DNA]</scope>
    <source>
        <strain>K12 / MG1655 / ATCC 47076</strain>
    </source>
</reference>
<reference key="3">
    <citation type="journal article" date="2006" name="Mol. Syst. Biol.">
        <title>Highly accurate genome sequences of Escherichia coli K-12 strains MG1655 and W3110.</title>
        <authorList>
            <person name="Hayashi K."/>
            <person name="Morooka N."/>
            <person name="Yamamoto Y."/>
            <person name="Fujita K."/>
            <person name="Isono K."/>
            <person name="Choi S."/>
            <person name="Ohtsubo E."/>
            <person name="Baba T."/>
            <person name="Wanner B.L."/>
            <person name="Mori H."/>
            <person name="Horiuchi T."/>
        </authorList>
    </citation>
    <scope>NUCLEOTIDE SEQUENCE [LARGE SCALE GENOMIC DNA]</scope>
    <source>
        <strain>K12 / W3110 / ATCC 27325 / DSM 5911</strain>
    </source>
</reference>
<sequence length="91" mass="9949">MKQLLASPSLQLVTYPASATAQSAEFASADCVTGLNEIGQISVSNISGDPQDVERIVALKADEQGASWYRIITMYEDQQPDNWRVQAILYA</sequence>
<keyword id="KW-0574">Periplasm</keyword>
<keyword id="KW-1185">Reference proteome</keyword>
<keyword id="KW-0732">Signal</keyword>
<dbReference type="EMBL" id="U14003">
    <property type="protein sequence ID" value="AAA97084.1"/>
    <property type="status" value="ALT_INIT"/>
    <property type="molecule type" value="Genomic_DNA"/>
</dbReference>
<dbReference type="EMBL" id="U00096">
    <property type="protein sequence ID" value="AAC77145.2"/>
    <property type="molecule type" value="Genomic_DNA"/>
</dbReference>
<dbReference type="EMBL" id="AP009048">
    <property type="protein sequence ID" value="BAE78189.1"/>
    <property type="molecule type" value="Genomic_DNA"/>
</dbReference>
<dbReference type="PIR" id="S56413">
    <property type="entry name" value="S56413"/>
</dbReference>
<dbReference type="RefSeq" id="NP_418609.4">
    <property type="nucleotide sequence ID" value="NC_000913.3"/>
</dbReference>
<dbReference type="RefSeq" id="WP_000811566.1">
    <property type="nucleotide sequence ID" value="NZ_STEB01000013.1"/>
</dbReference>
<dbReference type="SMR" id="P0AF82"/>
<dbReference type="BioGRID" id="4263375">
    <property type="interactions" value="5"/>
</dbReference>
<dbReference type="BioGRID" id="853001">
    <property type="interactions" value="4"/>
</dbReference>
<dbReference type="DIP" id="DIP-48101N"/>
<dbReference type="FunCoup" id="P0AF82">
    <property type="interactions" value="140"/>
</dbReference>
<dbReference type="IntAct" id="P0AF82">
    <property type="interactions" value="5"/>
</dbReference>
<dbReference type="STRING" id="511145.b4188"/>
<dbReference type="PaxDb" id="511145-b4188"/>
<dbReference type="EnsemblBacteria" id="AAC77145">
    <property type="protein sequence ID" value="AAC77145"/>
    <property type="gene ID" value="b4188"/>
</dbReference>
<dbReference type="GeneID" id="93777636"/>
<dbReference type="GeneID" id="948709"/>
<dbReference type="KEGG" id="ecj:JW5742"/>
<dbReference type="KEGG" id="eco:b4188"/>
<dbReference type="KEGG" id="ecoc:C3026_22625"/>
<dbReference type="PATRIC" id="fig|511145.12.peg.4320"/>
<dbReference type="EchoBASE" id="EB2412"/>
<dbReference type="eggNOG" id="ENOG5032S43">
    <property type="taxonomic scope" value="Bacteria"/>
</dbReference>
<dbReference type="HOGENOM" id="CLU_158602_3_0_6"/>
<dbReference type="InParanoid" id="P0AF82"/>
<dbReference type="OMA" id="EQQPDNW"/>
<dbReference type="OrthoDB" id="6566419at2"/>
<dbReference type="PhylomeDB" id="P0AF82"/>
<dbReference type="BioCyc" id="EcoCyc:G7851-MONOMER"/>
<dbReference type="PRO" id="PR:P0AF82"/>
<dbReference type="Proteomes" id="UP000000625">
    <property type="component" value="Chromosome"/>
</dbReference>
<dbReference type="GO" id="GO:0042597">
    <property type="term" value="C:periplasmic space"/>
    <property type="evidence" value="ECO:0007669"/>
    <property type="project" value="UniProtKB-SubCell"/>
</dbReference>
<dbReference type="GO" id="GO:0061133">
    <property type="term" value="F:endopeptidase activator activity"/>
    <property type="evidence" value="ECO:0000314"/>
    <property type="project" value="EcoCyc"/>
</dbReference>
<dbReference type="GO" id="GO:0006950">
    <property type="term" value="P:response to stress"/>
    <property type="evidence" value="ECO:0000318"/>
    <property type="project" value="GO_Central"/>
</dbReference>
<dbReference type="Gene3D" id="3.30.1660.10">
    <property type="entry name" value="Flavin-binding protein dodecin"/>
    <property type="match status" value="1"/>
</dbReference>
<dbReference type="InterPro" id="IPR051096">
    <property type="entry name" value="BhsA/McbA_stress_biofilm_assoc"/>
</dbReference>
<dbReference type="InterPro" id="IPR025543">
    <property type="entry name" value="Dodecin-like"/>
</dbReference>
<dbReference type="InterPro" id="IPR036275">
    <property type="entry name" value="YdgH-like_sf"/>
</dbReference>
<dbReference type="InterPro" id="IPR010854">
    <property type="entry name" value="YdgH/BhsA/McbA-like_dom"/>
</dbReference>
<dbReference type="PANTHER" id="PTHR34156:SF4">
    <property type="entry name" value="INNER MEMBRANE PROTEIN"/>
    <property type="match status" value="1"/>
</dbReference>
<dbReference type="PANTHER" id="PTHR34156">
    <property type="entry name" value="OUTER MEMBRANE PROTEIN-RELATED-RELATED"/>
    <property type="match status" value="1"/>
</dbReference>
<dbReference type="Pfam" id="PF07338">
    <property type="entry name" value="YdgH_BhsA-like"/>
    <property type="match status" value="1"/>
</dbReference>
<dbReference type="SUPFAM" id="SSF159871">
    <property type="entry name" value="YdgH-like"/>
    <property type="match status" value="1"/>
</dbReference>
<organism>
    <name type="scientific">Escherichia coli (strain K12)</name>
    <dbReference type="NCBI Taxonomy" id="83333"/>
    <lineage>
        <taxon>Bacteria</taxon>
        <taxon>Pseudomonadati</taxon>
        <taxon>Pseudomonadota</taxon>
        <taxon>Gammaproteobacteria</taxon>
        <taxon>Enterobacterales</taxon>
        <taxon>Enterobacteriaceae</taxon>
        <taxon>Escherichia</taxon>
    </lineage>
</organism>
<accession>P0AF82</accession>
<accession>P39296</accession>
<accession>Q2M6B7</accession>